<feature type="chain" id="PRO_0000195624" description="Tryptophanase">
    <location>
        <begin position="1"/>
        <end position="462"/>
    </location>
</feature>
<feature type="modified residue" description="N6-(pyridoxal phosphate)lysine" evidence="1">
    <location>
        <position position="261"/>
    </location>
</feature>
<comment type="catalytic activity">
    <reaction evidence="1">
        <text>L-tryptophan + H2O = indole + pyruvate + NH4(+)</text>
        <dbReference type="Rhea" id="RHEA:19553"/>
        <dbReference type="ChEBI" id="CHEBI:15361"/>
        <dbReference type="ChEBI" id="CHEBI:15377"/>
        <dbReference type="ChEBI" id="CHEBI:16881"/>
        <dbReference type="ChEBI" id="CHEBI:28938"/>
        <dbReference type="ChEBI" id="CHEBI:57912"/>
        <dbReference type="EC" id="4.1.99.1"/>
    </reaction>
</comment>
<comment type="cofactor">
    <cofactor evidence="1">
        <name>pyridoxal 5'-phosphate</name>
        <dbReference type="ChEBI" id="CHEBI:597326"/>
    </cofactor>
</comment>
<comment type="pathway">
    <text evidence="1">Amino-acid degradation; L-tryptophan degradation via pyruvate pathway; indole and pyruvate from L-tryptophan: step 1/1.</text>
</comment>
<comment type="subunit">
    <text evidence="1">Homotetramer.</text>
</comment>
<comment type="similarity">
    <text evidence="1">Belongs to the beta-eliminating lyase family.</text>
</comment>
<protein>
    <recommendedName>
        <fullName evidence="1">Tryptophanase</fullName>
        <ecNumber evidence="1">4.1.99.1</ecNumber>
    </recommendedName>
    <alternativeName>
        <fullName evidence="1">L-tryptophan indole-lyase</fullName>
        <shortName evidence="1">TNase</shortName>
    </alternativeName>
</protein>
<name>TNAA_CALS4</name>
<sequence length="462" mass="52495">MYDDLTRMAEPYKIKMVEPLKITTREERIRLIKEAGYNLFLLKSDDVYIDLLTDSGTAAMSDYQWAGMMLGDESYAGSRNYQHLCEVVQDIFGYKYVVPTHQGRGAEKVLFPLLIKKGQYVLGNMHFDTTKAHIELAGGIGIDMVIKEAEDTENYHPFKGNFDVEALENFIKEKGAENIAFILATVTCNSAGGQPVSMENIKEVRRIADKYGIRLFFDAARFAENAYFIKQREKGYENKSIKEIVREMFSYGDGFTMSAKKDALVNIGGLIAIKEDEELFTRVKTMLIPMEGFVTYGGLAGRDMEAMARGLEEVLDENYLAWRINQVKYLGDKLREAGIPIQYPTGGHAVFIDGKKFLPHVPQEQFPSHAICVELYIEAGIRAVEVGALLAGRDPETGQNRLPKLDFVRLTIPRRVYTNSHMDVVAEAVKRVYARRDQIKGYRFVYEPPILRHFTARLEPVE</sequence>
<dbReference type="EC" id="4.1.99.1" evidence="1"/>
<dbReference type="EMBL" id="AE008691">
    <property type="protein sequence ID" value="AAM24806.1"/>
    <property type="molecule type" value="Genomic_DNA"/>
</dbReference>
<dbReference type="RefSeq" id="WP_011025836.1">
    <property type="nucleotide sequence ID" value="NC_003869.1"/>
</dbReference>
<dbReference type="SMR" id="Q8R9K5"/>
<dbReference type="STRING" id="273068.TTE1602"/>
<dbReference type="KEGG" id="tte:TTE1602"/>
<dbReference type="eggNOG" id="COG3033">
    <property type="taxonomic scope" value="Bacteria"/>
</dbReference>
<dbReference type="HOGENOM" id="CLU_047223_0_0_9"/>
<dbReference type="UniPathway" id="UPA00332">
    <property type="reaction ID" value="UER00452"/>
</dbReference>
<dbReference type="Proteomes" id="UP000000555">
    <property type="component" value="Chromosome"/>
</dbReference>
<dbReference type="GO" id="GO:0009034">
    <property type="term" value="F:tryptophanase activity"/>
    <property type="evidence" value="ECO:0007669"/>
    <property type="project" value="UniProtKB-UniRule"/>
</dbReference>
<dbReference type="CDD" id="cd00617">
    <property type="entry name" value="Tnase_like"/>
    <property type="match status" value="1"/>
</dbReference>
<dbReference type="Gene3D" id="3.90.1150.10">
    <property type="entry name" value="Aspartate Aminotransferase, domain 1"/>
    <property type="match status" value="1"/>
</dbReference>
<dbReference type="Gene3D" id="3.40.640.10">
    <property type="entry name" value="Type I PLP-dependent aspartate aminotransferase-like (Major domain)"/>
    <property type="match status" value="1"/>
</dbReference>
<dbReference type="HAMAP" id="MF_00544">
    <property type="entry name" value="Tryptophanase"/>
    <property type="match status" value="1"/>
</dbReference>
<dbReference type="InterPro" id="IPR001597">
    <property type="entry name" value="ArAA_b-elim_lyase/Thr_aldolase"/>
</dbReference>
<dbReference type="InterPro" id="IPR011166">
    <property type="entry name" value="Beta-eliminating_lyase"/>
</dbReference>
<dbReference type="InterPro" id="IPR015424">
    <property type="entry name" value="PyrdxlP-dep_Trfase"/>
</dbReference>
<dbReference type="InterPro" id="IPR015421">
    <property type="entry name" value="PyrdxlP-dep_Trfase_major"/>
</dbReference>
<dbReference type="InterPro" id="IPR015422">
    <property type="entry name" value="PyrdxlP-dep_Trfase_small"/>
</dbReference>
<dbReference type="InterPro" id="IPR013440">
    <property type="entry name" value="TNase"/>
</dbReference>
<dbReference type="InterPro" id="IPR018176">
    <property type="entry name" value="Tryptophanase_CS"/>
</dbReference>
<dbReference type="NCBIfam" id="NF009709">
    <property type="entry name" value="PRK13238.1"/>
    <property type="match status" value="1"/>
</dbReference>
<dbReference type="PANTHER" id="PTHR32325">
    <property type="entry name" value="BETA-ELIMINATING LYASE-LIKE PROTEIN-RELATED"/>
    <property type="match status" value="1"/>
</dbReference>
<dbReference type="PANTHER" id="PTHR32325:SF4">
    <property type="entry name" value="TRYPTOPHANASE"/>
    <property type="match status" value="1"/>
</dbReference>
<dbReference type="Pfam" id="PF01212">
    <property type="entry name" value="Beta_elim_lyase"/>
    <property type="match status" value="1"/>
</dbReference>
<dbReference type="PIRSF" id="PIRSF001386">
    <property type="entry name" value="Trpase"/>
    <property type="match status" value="1"/>
</dbReference>
<dbReference type="SUPFAM" id="SSF53383">
    <property type="entry name" value="PLP-dependent transferases"/>
    <property type="match status" value="1"/>
</dbReference>
<dbReference type="PROSITE" id="PS00853">
    <property type="entry name" value="BETA_ELIM_LYASE"/>
    <property type="match status" value="1"/>
</dbReference>
<accession>Q8R9K5</accession>
<proteinExistence type="inferred from homology"/>
<organism>
    <name type="scientific">Caldanaerobacter subterraneus subsp. tengcongensis (strain DSM 15242 / JCM 11007 / NBRC 100824 / MB4)</name>
    <name type="common">Thermoanaerobacter tengcongensis</name>
    <dbReference type="NCBI Taxonomy" id="273068"/>
    <lineage>
        <taxon>Bacteria</taxon>
        <taxon>Bacillati</taxon>
        <taxon>Bacillota</taxon>
        <taxon>Clostridia</taxon>
        <taxon>Thermoanaerobacterales</taxon>
        <taxon>Thermoanaerobacteraceae</taxon>
        <taxon>Caldanaerobacter</taxon>
    </lineage>
</organism>
<keyword id="KW-0456">Lyase</keyword>
<keyword id="KW-0663">Pyridoxal phosphate</keyword>
<keyword id="KW-1185">Reference proteome</keyword>
<keyword id="KW-0823">Tryptophan catabolism</keyword>
<gene>
    <name evidence="1" type="primary">tnaA</name>
    <name type="ordered locus">TTE1602</name>
</gene>
<evidence type="ECO:0000255" key="1">
    <source>
        <dbReference type="HAMAP-Rule" id="MF_00544"/>
    </source>
</evidence>
<reference key="1">
    <citation type="journal article" date="2002" name="Genome Res.">
        <title>A complete sequence of the T. tengcongensis genome.</title>
        <authorList>
            <person name="Bao Q."/>
            <person name="Tian Y."/>
            <person name="Li W."/>
            <person name="Xu Z."/>
            <person name="Xuan Z."/>
            <person name="Hu S."/>
            <person name="Dong W."/>
            <person name="Yang J."/>
            <person name="Chen Y."/>
            <person name="Xue Y."/>
            <person name="Xu Y."/>
            <person name="Lai X."/>
            <person name="Huang L."/>
            <person name="Dong X."/>
            <person name="Ma Y."/>
            <person name="Ling L."/>
            <person name="Tan H."/>
            <person name="Chen R."/>
            <person name="Wang J."/>
            <person name="Yu J."/>
            <person name="Yang H."/>
        </authorList>
    </citation>
    <scope>NUCLEOTIDE SEQUENCE [LARGE SCALE GENOMIC DNA]</scope>
    <source>
        <strain>DSM 15242 / JCM 11007 / NBRC 100824 / MB4</strain>
    </source>
</reference>